<accession>C3P9A7</accession>
<reference key="1">
    <citation type="submission" date="2009-04" db="EMBL/GenBank/DDBJ databases">
        <title>Genome sequence of Bacillus anthracis A0248.</title>
        <authorList>
            <person name="Dodson R.J."/>
            <person name="Munk A.C."/>
            <person name="Bruce D."/>
            <person name="Detter C."/>
            <person name="Tapia R."/>
            <person name="Sutton G."/>
            <person name="Sims D."/>
            <person name="Brettin T."/>
        </authorList>
    </citation>
    <scope>NUCLEOTIDE SEQUENCE [LARGE SCALE GENOMIC DNA]</scope>
    <source>
        <strain>A0248</strain>
    </source>
</reference>
<sequence>MDERLLSGESAYEDADLEYSLRPQTLRQYIGQDKAKHNLEVFIEAAKMREETLDHVLLYGPPGLGKTTLANIIANEMGVNVRTTSGPAIERPGDLAAVLTSLQPGDVLFIDEIHRLHRSIEEVLYPAMEDFCLDIVIGKGPSARSVRLDLPPFTLVGATTRAGALSAPLRDRFGVLSRLEYYTVDQLSAIVERTAEVFEVEIDSLAALEIARRARGTPRIANRLLRRVRDFAQVRGNGTVTMEITQMALELLQVDKLGLDHIDHKLLLGIIEKFHGGPVGLETVSATIGEESHTIEDVYEPYLLQIGFLQRTPRGRIVTPLAYEHFGMEMPKV</sequence>
<dbReference type="EC" id="3.6.4.-" evidence="1"/>
<dbReference type="EMBL" id="CP001598">
    <property type="protein sequence ID" value="ACQ48331.1"/>
    <property type="molecule type" value="Genomic_DNA"/>
</dbReference>
<dbReference type="RefSeq" id="WP_000344455.1">
    <property type="nucleotide sequence ID" value="NC_012659.1"/>
</dbReference>
<dbReference type="SMR" id="C3P9A7"/>
<dbReference type="GeneID" id="45024291"/>
<dbReference type="KEGG" id="bai:BAA_4667"/>
<dbReference type="HOGENOM" id="CLU_055599_1_0_9"/>
<dbReference type="GO" id="GO:0005737">
    <property type="term" value="C:cytoplasm"/>
    <property type="evidence" value="ECO:0007669"/>
    <property type="project" value="UniProtKB-SubCell"/>
</dbReference>
<dbReference type="GO" id="GO:0048476">
    <property type="term" value="C:Holliday junction resolvase complex"/>
    <property type="evidence" value="ECO:0007669"/>
    <property type="project" value="UniProtKB-UniRule"/>
</dbReference>
<dbReference type="GO" id="GO:0005524">
    <property type="term" value="F:ATP binding"/>
    <property type="evidence" value="ECO:0007669"/>
    <property type="project" value="UniProtKB-UniRule"/>
</dbReference>
<dbReference type="GO" id="GO:0016887">
    <property type="term" value="F:ATP hydrolysis activity"/>
    <property type="evidence" value="ECO:0007669"/>
    <property type="project" value="InterPro"/>
</dbReference>
<dbReference type="GO" id="GO:0000400">
    <property type="term" value="F:four-way junction DNA binding"/>
    <property type="evidence" value="ECO:0007669"/>
    <property type="project" value="UniProtKB-UniRule"/>
</dbReference>
<dbReference type="GO" id="GO:0009378">
    <property type="term" value="F:four-way junction helicase activity"/>
    <property type="evidence" value="ECO:0007669"/>
    <property type="project" value="InterPro"/>
</dbReference>
<dbReference type="GO" id="GO:0006310">
    <property type="term" value="P:DNA recombination"/>
    <property type="evidence" value="ECO:0007669"/>
    <property type="project" value="UniProtKB-UniRule"/>
</dbReference>
<dbReference type="GO" id="GO:0006281">
    <property type="term" value="P:DNA repair"/>
    <property type="evidence" value="ECO:0007669"/>
    <property type="project" value="UniProtKB-UniRule"/>
</dbReference>
<dbReference type="CDD" id="cd00009">
    <property type="entry name" value="AAA"/>
    <property type="match status" value="1"/>
</dbReference>
<dbReference type="Gene3D" id="1.10.8.60">
    <property type="match status" value="1"/>
</dbReference>
<dbReference type="Gene3D" id="3.40.50.300">
    <property type="entry name" value="P-loop containing nucleotide triphosphate hydrolases"/>
    <property type="match status" value="1"/>
</dbReference>
<dbReference type="Gene3D" id="1.10.10.10">
    <property type="entry name" value="Winged helix-like DNA-binding domain superfamily/Winged helix DNA-binding domain"/>
    <property type="match status" value="1"/>
</dbReference>
<dbReference type="HAMAP" id="MF_00016">
    <property type="entry name" value="DNA_HJ_migration_RuvB"/>
    <property type="match status" value="1"/>
</dbReference>
<dbReference type="InterPro" id="IPR003593">
    <property type="entry name" value="AAA+_ATPase"/>
</dbReference>
<dbReference type="InterPro" id="IPR041445">
    <property type="entry name" value="AAA_lid_4"/>
</dbReference>
<dbReference type="InterPro" id="IPR004605">
    <property type="entry name" value="DNA_helicase_Holl-junc_RuvB"/>
</dbReference>
<dbReference type="InterPro" id="IPR027417">
    <property type="entry name" value="P-loop_NTPase"/>
</dbReference>
<dbReference type="InterPro" id="IPR008824">
    <property type="entry name" value="RuvB-like_N"/>
</dbReference>
<dbReference type="InterPro" id="IPR008823">
    <property type="entry name" value="RuvB_C"/>
</dbReference>
<dbReference type="InterPro" id="IPR036388">
    <property type="entry name" value="WH-like_DNA-bd_sf"/>
</dbReference>
<dbReference type="InterPro" id="IPR036390">
    <property type="entry name" value="WH_DNA-bd_sf"/>
</dbReference>
<dbReference type="NCBIfam" id="NF000868">
    <property type="entry name" value="PRK00080.1"/>
    <property type="match status" value="1"/>
</dbReference>
<dbReference type="NCBIfam" id="TIGR00635">
    <property type="entry name" value="ruvB"/>
    <property type="match status" value="1"/>
</dbReference>
<dbReference type="PANTHER" id="PTHR42848">
    <property type="match status" value="1"/>
</dbReference>
<dbReference type="PANTHER" id="PTHR42848:SF1">
    <property type="entry name" value="HOLLIDAY JUNCTION BRANCH MIGRATION COMPLEX SUBUNIT RUVB"/>
    <property type="match status" value="1"/>
</dbReference>
<dbReference type="Pfam" id="PF17864">
    <property type="entry name" value="AAA_lid_4"/>
    <property type="match status" value="1"/>
</dbReference>
<dbReference type="Pfam" id="PF05491">
    <property type="entry name" value="RuvB_C"/>
    <property type="match status" value="1"/>
</dbReference>
<dbReference type="Pfam" id="PF05496">
    <property type="entry name" value="RuvB_N"/>
    <property type="match status" value="1"/>
</dbReference>
<dbReference type="SMART" id="SM00382">
    <property type="entry name" value="AAA"/>
    <property type="match status" value="1"/>
</dbReference>
<dbReference type="SUPFAM" id="SSF52540">
    <property type="entry name" value="P-loop containing nucleoside triphosphate hydrolases"/>
    <property type="match status" value="1"/>
</dbReference>
<dbReference type="SUPFAM" id="SSF46785">
    <property type="entry name" value="Winged helix' DNA-binding domain"/>
    <property type="match status" value="1"/>
</dbReference>
<feature type="chain" id="PRO_1000195196" description="Holliday junction branch migration complex subunit RuvB">
    <location>
        <begin position="1"/>
        <end position="333"/>
    </location>
</feature>
<feature type="region of interest" description="Large ATPase domain (RuvB-L)" evidence="1">
    <location>
        <begin position="1"/>
        <end position="182"/>
    </location>
</feature>
<feature type="region of interest" description="Small ATPAse domain (RuvB-S)" evidence="1">
    <location>
        <begin position="183"/>
        <end position="253"/>
    </location>
</feature>
<feature type="region of interest" description="Head domain (RuvB-H)" evidence="1">
    <location>
        <begin position="256"/>
        <end position="333"/>
    </location>
</feature>
<feature type="binding site" evidence="1">
    <location>
        <position position="21"/>
    </location>
    <ligand>
        <name>ATP</name>
        <dbReference type="ChEBI" id="CHEBI:30616"/>
    </ligand>
</feature>
<feature type="binding site" evidence="1">
    <location>
        <position position="22"/>
    </location>
    <ligand>
        <name>ATP</name>
        <dbReference type="ChEBI" id="CHEBI:30616"/>
    </ligand>
</feature>
<feature type="binding site" evidence="1">
    <location>
        <position position="63"/>
    </location>
    <ligand>
        <name>ATP</name>
        <dbReference type="ChEBI" id="CHEBI:30616"/>
    </ligand>
</feature>
<feature type="binding site" evidence="1">
    <location>
        <position position="66"/>
    </location>
    <ligand>
        <name>ATP</name>
        <dbReference type="ChEBI" id="CHEBI:30616"/>
    </ligand>
</feature>
<feature type="binding site" evidence="1">
    <location>
        <position position="67"/>
    </location>
    <ligand>
        <name>ATP</name>
        <dbReference type="ChEBI" id="CHEBI:30616"/>
    </ligand>
</feature>
<feature type="binding site" evidence="1">
    <location>
        <position position="67"/>
    </location>
    <ligand>
        <name>Mg(2+)</name>
        <dbReference type="ChEBI" id="CHEBI:18420"/>
    </ligand>
</feature>
<feature type="binding site" evidence="1">
    <location>
        <position position="68"/>
    </location>
    <ligand>
        <name>ATP</name>
        <dbReference type="ChEBI" id="CHEBI:30616"/>
    </ligand>
</feature>
<feature type="binding site" evidence="1">
    <location>
        <begin position="129"/>
        <end position="131"/>
    </location>
    <ligand>
        <name>ATP</name>
        <dbReference type="ChEBI" id="CHEBI:30616"/>
    </ligand>
</feature>
<feature type="binding site" evidence="1">
    <location>
        <position position="172"/>
    </location>
    <ligand>
        <name>ATP</name>
        <dbReference type="ChEBI" id="CHEBI:30616"/>
    </ligand>
</feature>
<feature type="binding site" evidence="1">
    <location>
        <position position="182"/>
    </location>
    <ligand>
        <name>ATP</name>
        <dbReference type="ChEBI" id="CHEBI:30616"/>
    </ligand>
</feature>
<feature type="binding site" evidence="1">
    <location>
        <position position="219"/>
    </location>
    <ligand>
        <name>ATP</name>
        <dbReference type="ChEBI" id="CHEBI:30616"/>
    </ligand>
</feature>
<feature type="binding site" evidence="1">
    <location>
        <position position="311"/>
    </location>
    <ligand>
        <name>DNA</name>
        <dbReference type="ChEBI" id="CHEBI:16991"/>
    </ligand>
</feature>
<feature type="binding site" evidence="1">
    <location>
        <position position="316"/>
    </location>
    <ligand>
        <name>DNA</name>
        <dbReference type="ChEBI" id="CHEBI:16991"/>
    </ligand>
</feature>
<organism>
    <name type="scientific">Bacillus anthracis (strain A0248)</name>
    <dbReference type="NCBI Taxonomy" id="592021"/>
    <lineage>
        <taxon>Bacteria</taxon>
        <taxon>Bacillati</taxon>
        <taxon>Bacillota</taxon>
        <taxon>Bacilli</taxon>
        <taxon>Bacillales</taxon>
        <taxon>Bacillaceae</taxon>
        <taxon>Bacillus</taxon>
        <taxon>Bacillus cereus group</taxon>
    </lineage>
</organism>
<protein>
    <recommendedName>
        <fullName evidence="1">Holliday junction branch migration complex subunit RuvB</fullName>
        <ecNumber evidence="1">3.6.4.-</ecNumber>
    </recommendedName>
</protein>
<keyword id="KW-0067">ATP-binding</keyword>
<keyword id="KW-0963">Cytoplasm</keyword>
<keyword id="KW-0227">DNA damage</keyword>
<keyword id="KW-0233">DNA recombination</keyword>
<keyword id="KW-0234">DNA repair</keyword>
<keyword id="KW-0238">DNA-binding</keyword>
<keyword id="KW-0378">Hydrolase</keyword>
<keyword id="KW-0547">Nucleotide-binding</keyword>
<evidence type="ECO:0000255" key="1">
    <source>
        <dbReference type="HAMAP-Rule" id="MF_00016"/>
    </source>
</evidence>
<proteinExistence type="inferred from homology"/>
<name>RUVB_BACAA</name>
<comment type="function">
    <text evidence="1">The RuvA-RuvB-RuvC complex processes Holliday junction (HJ) DNA during genetic recombination and DNA repair, while the RuvA-RuvB complex plays an important role in the rescue of blocked DNA replication forks via replication fork reversal (RFR). RuvA specifically binds to HJ cruciform DNA, conferring on it an open structure. The RuvB hexamer acts as an ATP-dependent pump, pulling dsDNA into and through the RuvAB complex. RuvB forms 2 homohexamers on either side of HJ DNA bound by 1 or 2 RuvA tetramers; 4 subunits per hexamer contact DNA at a time. Coordinated motions by a converter formed by DNA-disengaged RuvB subunits stimulates ATP hydrolysis and nucleotide exchange. Immobilization of the converter enables RuvB to convert the ATP-contained energy into a lever motion, pulling 2 nucleotides of DNA out of the RuvA tetramer per ATP hydrolyzed, thus driving DNA branch migration. The RuvB motors rotate together with the DNA substrate, which together with the progressing nucleotide cycle form the mechanistic basis for DNA recombination by continuous HJ branch migration. Branch migration allows RuvC to scan DNA until it finds its consensus sequence, where it cleaves and resolves cruciform DNA.</text>
</comment>
<comment type="catalytic activity">
    <reaction evidence="1">
        <text>ATP + H2O = ADP + phosphate + H(+)</text>
        <dbReference type="Rhea" id="RHEA:13065"/>
        <dbReference type="ChEBI" id="CHEBI:15377"/>
        <dbReference type="ChEBI" id="CHEBI:15378"/>
        <dbReference type="ChEBI" id="CHEBI:30616"/>
        <dbReference type="ChEBI" id="CHEBI:43474"/>
        <dbReference type="ChEBI" id="CHEBI:456216"/>
    </reaction>
</comment>
<comment type="subunit">
    <text evidence="1">Homohexamer. Forms an RuvA(8)-RuvB(12)-Holliday junction (HJ) complex. HJ DNA is sandwiched between 2 RuvA tetramers; dsDNA enters through RuvA and exits via RuvB. An RuvB hexamer assembles on each DNA strand where it exits the tetramer. Each RuvB hexamer is contacted by two RuvA subunits (via domain III) on 2 adjacent RuvB subunits; this complex drives branch migration. In the full resolvosome a probable DNA-RuvA(4)-RuvB(12)-RuvC(2) complex forms which resolves the HJ.</text>
</comment>
<comment type="subcellular location">
    <subcellularLocation>
        <location evidence="1">Cytoplasm</location>
    </subcellularLocation>
</comment>
<comment type="domain">
    <text evidence="1">Has 3 domains, the large (RuvB-L) and small ATPase (RuvB-S) domains and the C-terminal head (RuvB-H) domain. The head domain binds DNA, while the ATPase domains jointly bind ATP, ADP or are empty depending on the state of the subunit in the translocation cycle. During a single DNA translocation step the structure of each domain remains the same, but their relative positions change.</text>
</comment>
<comment type="similarity">
    <text evidence="1">Belongs to the RuvB family.</text>
</comment>
<gene>
    <name evidence="1" type="primary">ruvB</name>
    <name type="ordered locus">BAA_4667</name>
</gene>